<protein>
    <recommendedName>
        <fullName evidence="1">Large ribosomal subunit protein bL34</fullName>
    </recommendedName>
    <alternativeName>
        <fullName evidence="2">50S ribosomal protein L34</fullName>
    </alternativeName>
</protein>
<comment type="similarity">
    <text evidence="1">Belongs to the bacterial ribosomal protein bL34 family.</text>
</comment>
<gene>
    <name evidence="1" type="primary">rpmH</name>
    <name type="ordered locus">Strop_4593</name>
</gene>
<name>RL34_SALTO</name>
<sequence>MSKRTFQPNNRRRAKTHGFRLRMRTRAGRAIISTRRAKGRARLAA</sequence>
<reference key="1">
    <citation type="journal article" date="2007" name="Proc. Natl. Acad. Sci. U.S.A.">
        <title>Genome sequencing reveals complex secondary metabolome in the marine actinomycete Salinispora tropica.</title>
        <authorList>
            <person name="Udwary D.W."/>
            <person name="Zeigler L."/>
            <person name="Asolkar R.N."/>
            <person name="Singan V."/>
            <person name="Lapidus A."/>
            <person name="Fenical W."/>
            <person name="Jensen P.R."/>
            <person name="Moore B.S."/>
        </authorList>
    </citation>
    <scope>NUCLEOTIDE SEQUENCE [LARGE SCALE GENOMIC DNA]</scope>
    <source>
        <strain>ATCC BAA-916 / DSM 44818 / JCM 13857 / NBRC 105044 / CNB-440</strain>
    </source>
</reference>
<organism>
    <name type="scientific">Salinispora tropica (strain ATCC BAA-916 / DSM 44818 / JCM 13857 / NBRC 105044 / CNB-440)</name>
    <dbReference type="NCBI Taxonomy" id="369723"/>
    <lineage>
        <taxon>Bacteria</taxon>
        <taxon>Bacillati</taxon>
        <taxon>Actinomycetota</taxon>
        <taxon>Actinomycetes</taxon>
        <taxon>Micromonosporales</taxon>
        <taxon>Micromonosporaceae</taxon>
        <taxon>Salinispora</taxon>
    </lineage>
</organism>
<dbReference type="EMBL" id="CP000667">
    <property type="protein sequence ID" value="ABP57021.1"/>
    <property type="molecule type" value="Genomic_DNA"/>
</dbReference>
<dbReference type="RefSeq" id="WP_012015785.1">
    <property type="nucleotide sequence ID" value="NC_009380.1"/>
</dbReference>
<dbReference type="SMR" id="A4XDK5"/>
<dbReference type="STRING" id="369723.Strop_4593"/>
<dbReference type="KEGG" id="stp:Strop_4593"/>
<dbReference type="PATRIC" id="fig|369723.5.peg.4752"/>
<dbReference type="eggNOG" id="COG0230">
    <property type="taxonomic scope" value="Bacteria"/>
</dbReference>
<dbReference type="HOGENOM" id="CLU_129938_2_1_11"/>
<dbReference type="Proteomes" id="UP000000235">
    <property type="component" value="Chromosome"/>
</dbReference>
<dbReference type="GO" id="GO:1990904">
    <property type="term" value="C:ribonucleoprotein complex"/>
    <property type="evidence" value="ECO:0007669"/>
    <property type="project" value="UniProtKB-KW"/>
</dbReference>
<dbReference type="GO" id="GO:0005840">
    <property type="term" value="C:ribosome"/>
    <property type="evidence" value="ECO:0007669"/>
    <property type="project" value="UniProtKB-KW"/>
</dbReference>
<dbReference type="GO" id="GO:0003735">
    <property type="term" value="F:structural constituent of ribosome"/>
    <property type="evidence" value="ECO:0007669"/>
    <property type="project" value="InterPro"/>
</dbReference>
<dbReference type="GO" id="GO:0006412">
    <property type="term" value="P:translation"/>
    <property type="evidence" value="ECO:0007669"/>
    <property type="project" value="UniProtKB-UniRule"/>
</dbReference>
<dbReference type="FunFam" id="1.10.287.3980:FF:000001">
    <property type="entry name" value="Mitochondrial ribosomal protein L34"/>
    <property type="match status" value="1"/>
</dbReference>
<dbReference type="Gene3D" id="1.10.287.3980">
    <property type="match status" value="1"/>
</dbReference>
<dbReference type="HAMAP" id="MF_00391">
    <property type="entry name" value="Ribosomal_bL34"/>
    <property type="match status" value="1"/>
</dbReference>
<dbReference type="InterPro" id="IPR000271">
    <property type="entry name" value="Ribosomal_bL34"/>
</dbReference>
<dbReference type="InterPro" id="IPR020939">
    <property type="entry name" value="Ribosomal_bL34_CS"/>
</dbReference>
<dbReference type="NCBIfam" id="TIGR01030">
    <property type="entry name" value="rpmH_bact"/>
    <property type="match status" value="1"/>
</dbReference>
<dbReference type="PANTHER" id="PTHR14503:SF4">
    <property type="entry name" value="LARGE RIBOSOMAL SUBUNIT PROTEIN BL34M"/>
    <property type="match status" value="1"/>
</dbReference>
<dbReference type="PANTHER" id="PTHR14503">
    <property type="entry name" value="MITOCHONDRIAL RIBOSOMAL PROTEIN 34 FAMILY MEMBER"/>
    <property type="match status" value="1"/>
</dbReference>
<dbReference type="Pfam" id="PF00468">
    <property type="entry name" value="Ribosomal_L34"/>
    <property type="match status" value="1"/>
</dbReference>
<dbReference type="PROSITE" id="PS00784">
    <property type="entry name" value="RIBOSOMAL_L34"/>
    <property type="match status" value="1"/>
</dbReference>
<feature type="chain" id="PRO_1000080266" description="Large ribosomal subunit protein bL34">
    <location>
        <begin position="1"/>
        <end position="45"/>
    </location>
</feature>
<keyword id="KW-1185">Reference proteome</keyword>
<keyword id="KW-0687">Ribonucleoprotein</keyword>
<keyword id="KW-0689">Ribosomal protein</keyword>
<evidence type="ECO:0000255" key="1">
    <source>
        <dbReference type="HAMAP-Rule" id="MF_00391"/>
    </source>
</evidence>
<evidence type="ECO:0000305" key="2"/>
<proteinExistence type="inferred from homology"/>
<accession>A4XDK5</accession>